<gene>
    <name evidence="5" type="primary">vlp23</name>
    <name evidence="6" type="synonym">vmp23</name>
</gene>
<reference evidence="9" key="1">
    <citation type="submission" date="1996-03" db="EMBL/GenBank/DDBJ databases">
        <authorList>
            <person name="Restrepo B.I."/>
            <person name="Carter C.J."/>
            <person name="Infante D."/>
            <person name="Barbour A.G."/>
        </authorList>
    </citation>
    <scope>NUCLEOTIDE SEQUENCE [GENOMIC DNA]</scope>
    <source>
        <strain>ATCC 35209 / HS1</strain>
    </source>
</reference>
<reference evidence="7" key="2">
    <citation type="journal article" date="1998" name="Infect. Immun.">
        <title>Population structure of the relapsing fever spirochete Borrelia hermsii as indicated by polymorphism of two multigene families that encode immunogenic outer surface lipoproteins.</title>
        <authorList>
            <person name="Hinnebusch B.J."/>
            <person name="Barbour A.G."/>
            <person name="Restrepo B.I."/>
            <person name="Schwan T.G."/>
        </authorList>
    </citation>
    <scope>NOMENCLATURE</scope>
</reference>
<dbReference type="EMBL" id="U52041">
    <property type="protein sequence ID" value="AAB17737.1"/>
    <property type="molecule type" value="Genomic_DNA"/>
</dbReference>
<dbReference type="SMR" id="P70904"/>
<dbReference type="GO" id="GO:0009279">
    <property type="term" value="C:cell outer membrane"/>
    <property type="evidence" value="ECO:0007669"/>
    <property type="project" value="UniProtKB-SubCell"/>
</dbReference>
<dbReference type="InterPro" id="IPR000680">
    <property type="entry name" value="Borrelia_lipo"/>
</dbReference>
<dbReference type="Pfam" id="PF00921">
    <property type="entry name" value="Lipoprotein_2"/>
    <property type="match status" value="1"/>
</dbReference>
<dbReference type="SUPFAM" id="SSF74748">
    <property type="entry name" value="Variable surface antigen VlsE"/>
    <property type="match status" value="1"/>
</dbReference>
<dbReference type="PROSITE" id="PS51257">
    <property type="entry name" value="PROKAR_LIPOPROTEIN"/>
    <property type="match status" value="1"/>
</dbReference>
<name>VLP23_BORHE</name>
<protein>
    <recommendedName>
        <fullName evidence="5">Variable large protein 23</fullName>
    </recommendedName>
</protein>
<keyword id="KW-0998">Cell outer membrane</keyword>
<keyword id="KW-0449">Lipoprotein</keyword>
<keyword id="KW-0472">Membrane</keyword>
<keyword id="KW-0564">Palmitate</keyword>
<keyword id="KW-0614">Plasmid</keyword>
<keyword id="KW-0732">Signal</keyword>
<proteinExistence type="inferred from homology"/>
<comment type="function">
    <text evidence="1">The Vlp and Vsp proteins are antigenically distinct proteins, only one vlp or vsp gene is transcriptionally active at any one time. Switching between these genes is a mechanism of host immune response evasion.</text>
</comment>
<comment type="subcellular location">
    <subcellularLocation>
        <location evidence="1">Cell outer membrane</location>
        <topology>Lipid-anchor</topology>
    </subcellularLocation>
</comment>
<comment type="miscellaneous">
    <text evidence="8">Genes for both Vlp and Vsp families are on (usually) unnamed linear plasmids in B.hermsii HS1.</text>
</comment>
<comment type="similarity">
    <text evidence="4">Belongs to the variable large protein (Vlp) family. Delta subfamily.</text>
</comment>
<organism>
    <name type="scientific">Borrelia hermsii</name>
    <dbReference type="NCBI Taxonomy" id="140"/>
    <lineage>
        <taxon>Bacteria</taxon>
        <taxon>Pseudomonadati</taxon>
        <taxon>Spirochaetota</taxon>
        <taxon>Spirochaetia</taxon>
        <taxon>Spirochaetales</taxon>
        <taxon>Borreliaceae</taxon>
        <taxon>Borrelia</taxon>
    </lineage>
</organism>
<evidence type="ECO:0000250" key="1">
    <source>
        <dbReference type="UniProtKB" id="P21875"/>
    </source>
</evidence>
<evidence type="ECO:0000255" key="2"/>
<evidence type="ECO:0000255" key="3">
    <source>
        <dbReference type="PROSITE-ProRule" id="PRU00303"/>
    </source>
</evidence>
<evidence type="ECO:0000269" key="4">
    <source>
    </source>
</evidence>
<evidence type="ECO:0000303" key="5">
    <source>
    </source>
</evidence>
<evidence type="ECO:0000303" key="6">
    <source ref="1"/>
</evidence>
<evidence type="ECO:0000305" key="7"/>
<evidence type="ECO:0000305" key="8">
    <source>
    </source>
</evidence>
<evidence type="ECO:0000312" key="9">
    <source>
        <dbReference type="EMBL" id="AAB17737.1"/>
    </source>
</evidence>
<sequence>MRKRISAIIMTLFMVLVSCNSGGVAEDPKTVYLTSIANLGKGFLDVFVTFGDMVAGAFGIKADTKKSDIGKYFNDIEKTMTTVKKRLQDEVAKNGNYVKVKEVVDKFVADVLDKIAAGAKKQLRATGDAAIGMLLNEDAAPAEVASVNSLVKGIKEIVGVVLKDNEGDAAATKTADAEKKSVGKLLGKGAADGTETQAAAASASIGAITGADILQAIAKSGKAGAGEIKIEEAKNAAEIAAAKADSKDLAIDSAKKDAVIAAGIALRAMAKDGKFAAKNNEEKSANAVNGAAASAVGKTLSTLIIAIRNTVDSGLKTINEALATVKQEDKSAEATNPAEATTSGQ</sequence>
<feature type="signal peptide" evidence="3">
    <location>
        <begin position="1"/>
        <end position="18"/>
    </location>
</feature>
<feature type="chain" id="PRO_0000244508" description="Variable large protein 23" evidence="2">
    <location>
        <begin position="19"/>
        <end position="345"/>
    </location>
</feature>
<feature type="lipid moiety-binding region" description="N-palmitoyl cysteine" evidence="2 7">
    <location>
        <position position="19"/>
    </location>
</feature>
<feature type="lipid moiety-binding region" description="S-diacylglycerol cysteine" evidence="2 7">
    <location>
        <position position="19"/>
    </location>
</feature>
<geneLocation type="plasmid" evidence="4"/>
<accession>P70904</accession>